<evidence type="ECO:0000255" key="1">
    <source>
        <dbReference type="HAMAP-Rule" id="MF_01588"/>
    </source>
</evidence>
<reference key="1">
    <citation type="journal article" date="2009" name="Genome Biol.">
        <title>Genomic and genetic analyses of diversity and plant interactions of Pseudomonas fluorescens.</title>
        <authorList>
            <person name="Silby M.W."/>
            <person name="Cerdeno-Tarraga A.M."/>
            <person name="Vernikos G.S."/>
            <person name="Giddens S.R."/>
            <person name="Jackson R.W."/>
            <person name="Preston G.M."/>
            <person name="Zhang X.-X."/>
            <person name="Moon C.D."/>
            <person name="Gehrig S.M."/>
            <person name="Godfrey S.A.C."/>
            <person name="Knight C.G."/>
            <person name="Malone J.G."/>
            <person name="Robinson Z."/>
            <person name="Spiers A.J."/>
            <person name="Harris S."/>
            <person name="Challis G.L."/>
            <person name="Yaxley A.M."/>
            <person name="Harris D."/>
            <person name="Seeger K."/>
            <person name="Murphy L."/>
            <person name="Rutter S."/>
            <person name="Squares R."/>
            <person name="Quail M.A."/>
            <person name="Saunders E."/>
            <person name="Mavromatis K."/>
            <person name="Brettin T.S."/>
            <person name="Bentley S.D."/>
            <person name="Hothersall J."/>
            <person name="Stephens E."/>
            <person name="Thomas C.M."/>
            <person name="Parkhill J."/>
            <person name="Levy S.B."/>
            <person name="Rainey P.B."/>
            <person name="Thomson N.R."/>
        </authorList>
    </citation>
    <scope>NUCLEOTIDE SEQUENCE [LARGE SCALE GENOMIC DNA]</scope>
    <source>
        <strain>Pf0-1</strain>
    </source>
</reference>
<gene>
    <name evidence="1" type="primary">ligA</name>
    <name type="ordered locus">Pfl01_1801</name>
</gene>
<accession>Q3KFB2</accession>
<feature type="chain" id="PRO_0000313377" description="DNA ligase">
    <location>
        <begin position="1"/>
        <end position="785"/>
    </location>
</feature>
<feature type="domain" description="BRCT" evidence="1">
    <location>
        <begin position="702"/>
        <end position="785"/>
    </location>
</feature>
<feature type="active site" description="N6-AMP-lysine intermediate" evidence="1">
    <location>
        <position position="123"/>
    </location>
</feature>
<feature type="binding site" evidence="1">
    <location>
        <begin position="32"/>
        <end position="36"/>
    </location>
    <ligand>
        <name>NAD(+)</name>
        <dbReference type="ChEBI" id="CHEBI:57540"/>
    </ligand>
</feature>
<feature type="binding site" evidence="1">
    <location>
        <begin position="81"/>
        <end position="82"/>
    </location>
    <ligand>
        <name>NAD(+)</name>
        <dbReference type="ChEBI" id="CHEBI:57540"/>
    </ligand>
</feature>
<feature type="binding site" evidence="1">
    <location>
        <position position="121"/>
    </location>
    <ligand>
        <name>NAD(+)</name>
        <dbReference type="ChEBI" id="CHEBI:57540"/>
    </ligand>
</feature>
<feature type="binding site" evidence="1">
    <location>
        <position position="144"/>
    </location>
    <ligand>
        <name>NAD(+)</name>
        <dbReference type="ChEBI" id="CHEBI:57540"/>
    </ligand>
</feature>
<feature type="binding site" evidence="1">
    <location>
        <position position="181"/>
    </location>
    <ligand>
        <name>NAD(+)</name>
        <dbReference type="ChEBI" id="CHEBI:57540"/>
    </ligand>
</feature>
<feature type="binding site" evidence="1">
    <location>
        <position position="297"/>
    </location>
    <ligand>
        <name>NAD(+)</name>
        <dbReference type="ChEBI" id="CHEBI:57540"/>
    </ligand>
</feature>
<feature type="binding site" evidence="1">
    <location>
        <position position="321"/>
    </location>
    <ligand>
        <name>NAD(+)</name>
        <dbReference type="ChEBI" id="CHEBI:57540"/>
    </ligand>
</feature>
<feature type="binding site" evidence="1">
    <location>
        <position position="415"/>
    </location>
    <ligand>
        <name>Zn(2+)</name>
        <dbReference type="ChEBI" id="CHEBI:29105"/>
    </ligand>
</feature>
<feature type="binding site" evidence="1">
    <location>
        <position position="418"/>
    </location>
    <ligand>
        <name>Zn(2+)</name>
        <dbReference type="ChEBI" id="CHEBI:29105"/>
    </ligand>
</feature>
<feature type="binding site" evidence="1">
    <location>
        <position position="445"/>
    </location>
    <ligand>
        <name>Zn(2+)</name>
        <dbReference type="ChEBI" id="CHEBI:29105"/>
    </ligand>
</feature>
<feature type="binding site" evidence="1">
    <location>
        <position position="451"/>
    </location>
    <ligand>
        <name>Zn(2+)</name>
        <dbReference type="ChEBI" id="CHEBI:29105"/>
    </ligand>
</feature>
<protein>
    <recommendedName>
        <fullName evidence="1">DNA ligase</fullName>
        <ecNumber evidence="1">6.5.1.2</ecNumber>
    </recommendedName>
    <alternativeName>
        <fullName evidence="1">Polydeoxyribonucleotide synthase [NAD(+)]</fullName>
    </alternativeName>
</protein>
<comment type="function">
    <text evidence="1">DNA ligase that catalyzes the formation of phosphodiester linkages between 5'-phosphoryl and 3'-hydroxyl groups in double-stranded DNA using NAD as a coenzyme and as the energy source for the reaction. It is essential for DNA replication and repair of damaged DNA.</text>
</comment>
<comment type="catalytic activity">
    <reaction evidence="1">
        <text>NAD(+) + (deoxyribonucleotide)n-3'-hydroxyl + 5'-phospho-(deoxyribonucleotide)m = (deoxyribonucleotide)n+m + AMP + beta-nicotinamide D-nucleotide.</text>
        <dbReference type="EC" id="6.5.1.2"/>
    </reaction>
</comment>
<comment type="cofactor">
    <cofactor evidence="1">
        <name>Mg(2+)</name>
        <dbReference type="ChEBI" id="CHEBI:18420"/>
    </cofactor>
    <cofactor evidence="1">
        <name>Mn(2+)</name>
        <dbReference type="ChEBI" id="CHEBI:29035"/>
    </cofactor>
</comment>
<comment type="similarity">
    <text evidence="1">Belongs to the NAD-dependent DNA ligase family. LigA subfamily.</text>
</comment>
<organism>
    <name type="scientific">Pseudomonas fluorescens (strain Pf0-1)</name>
    <dbReference type="NCBI Taxonomy" id="205922"/>
    <lineage>
        <taxon>Bacteria</taxon>
        <taxon>Pseudomonadati</taxon>
        <taxon>Pseudomonadota</taxon>
        <taxon>Gammaproteobacteria</taxon>
        <taxon>Pseudomonadales</taxon>
        <taxon>Pseudomonadaceae</taxon>
        <taxon>Pseudomonas</taxon>
    </lineage>
</organism>
<keyword id="KW-0227">DNA damage</keyword>
<keyword id="KW-0234">DNA repair</keyword>
<keyword id="KW-0235">DNA replication</keyword>
<keyword id="KW-0436">Ligase</keyword>
<keyword id="KW-0460">Magnesium</keyword>
<keyword id="KW-0464">Manganese</keyword>
<keyword id="KW-0479">Metal-binding</keyword>
<keyword id="KW-0520">NAD</keyword>
<keyword id="KW-0862">Zinc</keyword>
<name>DNLJ_PSEPF</name>
<proteinExistence type="inferred from homology"/>
<sequence>MTAAKDRILELRAELDQHNYRYHVLDEPSIPDAEYDRLFHELKALEAANPELITSDSPTQRVGSVALTAFTQVRHEVPMLSLGNAFEETDMREFDRRVTEGLDLPAGDLFGGGAAVEYSCEPKLDGLAVSLLYQDGVLVRGATRGDGTTGEDISVNVRTVRNIPLKLHGTGWPATLEVRGEVFMSKAGFERLNASQLEVGGKTFANPRNAAAGSLRQLDSKITANRPLEFCCYGIGQVSHDISDTHIGNLQQLKAWGMPISHELKLAKGIGECLDYYRDIGERRNSLAYEIDGVVFKVNSIADQRELGFRAREPRWAIAHKFPAMEELTELLDVEFQVGRTGAVTPVARLKPVKVAGVTVANATLHNMDEVARLGLMIGDTVIIRRAGDVIPQVVQVVMERRPEDARPVQIPESCPVCGSHVERTQLVKRSKGKETISEGAVYRCVGRLACGAQLKQAIIHFVSRRAMDIEGLGDKSVEQLVDEGLVSSPADLYALKFEDIVDLEGFAEVSSNKLLAAIEDSKKPGLARFIYALGIPDVGEETAKVLARSLGSLERVQQALPQVLTYLPDIGLEVAHEIHSFFEDAHNRQVITELLGHGLQIQDQGELGAEFAASTTLGGFLDKLHIPSVGPGGAQKLADKFESLEGVMNADWLDMRQALPEKQANSVREFFALPEHRQLAEDAEKQLRDFGMHWQSEKKVVEGLPLAGETWVLTGKVELMSRDVAKEHLESLGAKVAGSVSAKTHCVVAGPGAGSKLTKANELGVKVMDEEAFIAFLKGHGISA</sequence>
<dbReference type="EC" id="6.5.1.2" evidence="1"/>
<dbReference type="EMBL" id="CP000094">
    <property type="protein sequence ID" value="ABA73544.1"/>
    <property type="molecule type" value="Genomic_DNA"/>
</dbReference>
<dbReference type="RefSeq" id="WP_011333272.1">
    <property type="nucleotide sequence ID" value="NC_007492.2"/>
</dbReference>
<dbReference type="SMR" id="Q3KFB2"/>
<dbReference type="KEGG" id="pfo:Pfl01_1801"/>
<dbReference type="eggNOG" id="COG0272">
    <property type="taxonomic scope" value="Bacteria"/>
</dbReference>
<dbReference type="HOGENOM" id="CLU_007764_2_1_6"/>
<dbReference type="Proteomes" id="UP000002704">
    <property type="component" value="Chromosome"/>
</dbReference>
<dbReference type="GO" id="GO:0005829">
    <property type="term" value="C:cytosol"/>
    <property type="evidence" value="ECO:0007669"/>
    <property type="project" value="TreeGrafter"/>
</dbReference>
<dbReference type="GO" id="GO:0003677">
    <property type="term" value="F:DNA binding"/>
    <property type="evidence" value="ECO:0007669"/>
    <property type="project" value="InterPro"/>
</dbReference>
<dbReference type="GO" id="GO:0003911">
    <property type="term" value="F:DNA ligase (NAD+) activity"/>
    <property type="evidence" value="ECO:0007669"/>
    <property type="project" value="UniProtKB-UniRule"/>
</dbReference>
<dbReference type="GO" id="GO:0046872">
    <property type="term" value="F:metal ion binding"/>
    <property type="evidence" value="ECO:0007669"/>
    <property type="project" value="UniProtKB-KW"/>
</dbReference>
<dbReference type="GO" id="GO:0006281">
    <property type="term" value="P:DNA repair"/>
    <property type="evidence" value="ECO:0007669"/>
    <property type="project" value="UniProtKB-KW"/>
</dbReference>
<dbReference type="GO" id="GO:0006260">
    <property type="term" value="P:DNA replication"/>
    <property type="evidence" value="ECO:0007669"/>
    <property type="project" value="UniProtKB-KW"/>
</dbReference>
<dbReference type="CDD" id="cd17748">
    <property type="entry name" value="BRCT_DNA_ligase_like"/>
    <property type="match status" value="1"/>
</dbReference>
<dbReference type="CDD" id="cd00114">
    <property type="entry name" value="LIGANc"/>
    <property type="match status" value="1"/>
</dbReference>
<dbReference type="FunFam" id="1.10.150.20:FF:000006">
    <property type="entry name" value="DNA ligase"/>
    <property type="match status" value="1"/>
</dbReference>
<dbReference type="FunFam" id="1.10.150.20:FF:000007">
    <property type="entry name" value="DNA ligase"/>
    <property type="match status" value="1"/>
</dbReference>
<dbReference type="FunFam" id="1.10.287.610:FF:000002">
    <property type="entry name" value="DNA ligase"/>
    <property type="match status" value="1"/>
</dbReference>
<dbReference type="FunFam" id="2.40.50.140:FF:000012">
    <property type="entry name" value="DNA ligase"/>
    <property type="match status" value="1"/>
</dbReference>
<dbReference type="FunFam" id="3.30.470.30:FF:000001">
    <property type="entry name" value="DNA ligase"/>
    <property type="match status" value="1"/>
</dbReference>
<dbReference type="Gene3D" id="6.20.10.30">
    <property type="match status" value="1"/>
</dbReference>
<dbReference type="Gene3D" id="1.10.150.20">
    <property type="entry name" value="5' to 3' exonuclease, C-terminal subdomain"/>
    <property type="match status" value="3"/>
</dbReference>
<dbReference type="Gene3D" id="3.40.50.10190">
    <property type="entry name" value="BRCT domain"/>
    <property type="match status" value="1"/>
</dbReference>
<dbReference type="Gene3D" id="3.30.470.30">
    <property type="entry name" value="DNA ligase/mRNA capping enzyme"/>
    <property type="match status" value="1"/>
</dbReference>
<dbReference type="Gene3D" id="1.10.287.610">
    <property type="entry name" value="Helix hairpin bin"/>
    <property type="match status" value="1"/>
</dbReference>
<dbReference type="Gene3D" id="2.40.50.140">
    <property type="entry name" value="Nucleic acid-binding proteins"/>
    <property type="match status" value="1"/>
</dbReference>
<dbReference type="HAMAP" id="MF_01588">
    <property type="entry name" value="DNA_ligase_A"/>
    <property type="match status" value="1"/>
</dbReference>
<dbReference type="InterPro" id="IPR001357">
    <property type="entry name" value="BRCT_dom"/>
</dbReference>
<dbReference type="InterPro" id="IPR036420">
    <property type="entry name" value="BRCT_dom_sf"/>
</dbReference>
<dbReference type="InterPro" id="IPR041663">
    <property type="entry name" value="DisA/LigA_HHH"/>
</dbReference>
<dbReference type="InterPro" id="IPR001679">
    <property type="entry name" value="DNA_ligase"/>
</dbReference>
<dbReference type="InterPro" id="IPR018239">
    <property type="entry name" value="DNA_ligase_AS"/>
</dbReference>
<dbReference type="InterPro" id="IPR033136">
    <property type="entry name" value="DNA_ligase_CS"/>
</dbReference>
<dbReference type="InterPro" id="IPR013839">
    <property type="entry name" value="DNAligase_adenylation"/>
</dbReference>
<dbReference type="InterPro" id="IPR013840">
    <property type="entry name" value="DNAligase_N"/>
</dbReference>
<dbReference type="InterPro" id="IPR003583">
    <property type="entry name" value="Hlx-hairpin-Hlx_DNA-bd_motif"/>
</dbReference>
<dbReference type="InterPro" id="IPR012340">
    <property type="entry name" value="NA-bd_OB-fold"/>
</dbReference>
<dbReference type="InterPro" id="IPR004150">
    <property type="entry name" value="NAD_DNA_ligase_OB"/>
</dbReference>
<dbReference type="InterPro" id="IPR010994">
    <property type="entry name" value="RuvA_2-like"/>
</dbReference>
<dbReference type="NCBIfam" id="TIGR00575">
    <property type="entry name" value="dnlj"/>
    <property type="match status" value="1"/>
</dbReference>
<dbReference type="NCBIfam" id="NF005932">
    <property type="entry name" value="PRK07956.1"/>
    <property type="match status" value="1"/>
</dbReference>
<dbReference type="PANTHER" id="PTHR23389">
    <property type="entry name" value="CHROMOSOME TRANSMISSION FIDELITY FACTOR 18"/>
    <property type="match status" value="1"/>
</dbReference>
<dbReference type="PANTHER" id="PTHR23389:SF9">
    <property type="entry name" value="DNA LIGASE"/>
    <property type="match status" value="1"/>
</dbReference>
<dbReference type="Pfam" id="PF00533">
    <property type="entry name" value="BRCT"/>
    <property type="match status" value="1"/>
</dbReference>
<dbReference type="Pfam" id="PF01653">
    <property type="entry name" value="DNA_ligase_aden"/>
    <property type="match status" value="1"/>
</dbReference>
<dbReference type="Pfam" id="PF03120">
    <property type="entry name" value="DNA_ligase_OB"/>
    <property type="match status" value="1"/>
</dbReference>
<dbReference type="Pfam" id="PF12826">
    <property type="entry name" value="HHH_2"/>
    <property type="match status" value="1"/>
</dbReference>
<dbReference type="Pfam" id="PF22745">
    <property type="entry name" value="Nlig-Ia"/>
    <property type="match status" value="1"/>
</dbReference>
<dbReference type="PIRSF" id="PIRSF001604">
    <property type="entry name" value="LigA"/>
    <property type="match status" value="1"/>
</dbReference>
<dbReference type="SMART" id="SM00292">
    <property type="entry name" value="BRCT"/>
    <property type="match status" value="1"/>
</dbReference>
<dbReference type="SMART" id="SM00278">
    <property type="entry name" value="HhH1"/>
    <property type="match status" value="3"/>
</dbReference>
<dbReference type="SMART" id="SM00532">
    <property type="entry name" value="LIGANc"/>
    <property type="match status" value="1"/>
</dbReference>
<dbReference type="SUPFAM" id="SSF52113">
    <property type="entry name" value="BRCT domain"/>
    <property type="match status" value="1"/>
</dbReference>
<dbReference type="SUPFAM" id="SSF56091">
    <property type="entry name" value="DNA ligase/mRNA capping enzyme, catalytic domain"/>
    <property type="match status" value="1"/>
</dbReference>
<dbReference type="SUPFAM" id="SSF50249">
    <property type="entry name" value="Nucleic acid-binding proteins"/>
    <property type="match status" value="1"/>
</dbReference>
<dbReference type="SUPFAM" id="SSF47781">
    <property type="entry name" value="RuvA domain 2-like"/>
    <property type="match status" value="2"/>
</dbReference>
<dbReference type="PROSITE" id="PS50172">
    <property type="entry name" value="BRCT"/>
    <property type="match status" value="1"/>
</dbReference>
<dbReference type="PROSITE" id="PS01055">
    <property type="entry name" value="DNA_LIGASE_N1"/>
    <property type="match status" value="1"/>
</dbReference>
<dbReference type="PROSITE" id="PS01056">
    <property type="entry name" value="DNA_LIGASE_N2"/>
    <property type="match status" value="1"/>
</dbReference>